<name>RS19_HAEDU</name>
<sequence length="91" mass="10259">MPRSLKKGPFLDLHLLKKVEKAVESGDKKPIKTWSRRSMIIPSMIGLTIAVHNGRQHVPVYVSDEMIGHKLGEFAPTRTYRGHAADKKAKK</sequence>
<reference key="1">
    <citation type="submission" date="2003-06" db="EMBL/GenBank/DDBJ databases">
        <title>The complete genome sequence of Haemophilus ducreyi.</title>
        <authorList>
            <person name="Munson R.S. Jr."/>
            <person name="Ray W.C."/>
            <person name="Mahairas G."/>
            <person name="Sabo P."/>
            <person name="Mungur R."/>
            <person name="Johnson L."/>
            <person name="Nguyen D."/>
            <person name="Wang J."/>
            <person name="Forst C."/>
            <person name="Hood L."/>
        </authorList>
    </citation>
    <scope>NUCLEOTIDE SEQUENCE [LARGE SCALE GENOMIC DNA]</scope>
    <source>
        <strain>35000HP / ATCC 700724</strain>
    </source>
</reference>
<accession>P67898</accession>
<accession>P44385</accession>
<dbReference type="EMBL" id="AE017143">
    <property type="protein sequence ID" value="AAP96696.1"/>
    <property type="molecule type" value="Genomic_DNA"/>
</dbReference>
<dbReference type="RefSeq" id="WP_005539416.1">
    <property type="nucleotide sequence ID" value="NC_002940.2"/>
</dbReference>
<dbReference type="SMR" id="P67898"/>
<dbReference type="STRING" id="233412.HD_1979"/>
<dbReference type="GeneID" id="93298793"/>
<dbReference type="KEGG" id="hdu:HD_1979"/>
<dbReference type="eggNOG" id="COG0185">
    <property type="taxonomic scope" value="Bacteria"/>
</dbReference>
<dbReference type="HOGENOM" id="CLU_144911_0_1_6"/>
<dbReference type="OrthoDB" id="9797833at2"/>
<dbReference type="Proteomes" id="UP000001022">
    <property type="component" value="Chromosome"/>
</dbReference>
<dbReference type="GO" id="GO:0005737">
    <property type="term" value="C:cytoplasm"/>
    <property type="evidence" value="ECO:0007669"/>
    <property type="project" value="UniProtKB-ARBA"/>
</dbReference>
<dbReference type="GO" id="GO:0015935">
    <property type="term" value="C:small ribosomal subunit"/>
    <property type="evidence" value="ECO:0007669"/>
    <property type="project" value="InterPro"/>
</dbReference>
<dbReference type="GO" id="GO:0019843">
    <property type="term" value="F:rRNA binding"/>
    <property type="evidence" value="ECO:0007669"/>
    <property type="project" value="UniProtKB-UniRule"/>
</dbReference>
<dbReference type="GO" id="GO:0003735">
    <property type="term" value="F:structural constituent of ribosome"/>
    <property type="evidence" value="ECO:0007669"/>
    <property type="project" value="InterPro"/>
</dbReference>
<dbReference type="GO" id="GO:0000028">
    <property type="term" value="P:ribosomal small subunit assembly"/>
    <property type="evidence" value="ECO:0007669"/>
    <property type="project" value="TreeGrafter"/>
</dbReference>
<dbReference type="GO" id="GO:0006412">
    <property type="term" value="P:translation"/>
    <property type="evidence" value="ECO:0007669"/>
    <property type="project" value="UniProtKB-UniRule"/>
</dbReference>
<dbReference type="FunFam" id="3.30.860.10:FF:000001">
    <property type="entry name" value="30S ribosomal protein S19"/>
    <property type="match status" value="1"/>
</dbReference>
<dbReference type="Gene3D" id="3.30.860.10">
    <property type="entry name" value="30s Ribosomal Protein S19, Chain A"/>
    <property type="match status" value="1"/>
</dbReference>
<dbReference type="HAMAP" id="MF_00531">
    <property type="entry name" value="Ribosomal_uS19"/>
    <property type="match status" value="1"/>
</dbReference>
<dbReference type="InterPro" id="IPR002222">
    <property type="entry name" value="Ribosomal_uS19"/>
</dbReference>
<dbReference type="InterPro" id="IPR005732">
    <property type="entry name" value="Ribosomal_uS19_bac-type"/>
</dbReference>
<dbReference type="InterPro" id="IPR020934">
    <property type="entry name" value="Ribosomal_uS19_CS"/>
</dbReference>
<dbReference type="InterPro" id="IPR023575">
    <property type="entry name" value="Ribosomal_uS19_SF"/>
</dbReference>
<dbReference type="NCBIfam" id="TIGR01050">
    <property type="entry name" value="rpsS_bact"/>
    <property type="match status" value="1"/>
</dbReference>
<dbReference type="PANTHER" id="PTHR11880">
    <property type="entry name" value="RIBOSOMAL PROTEIN S19P FAMILY MEMBER"/>
    <property type="match status" value="1"/>
</dbReference>
<dbReference type="PANTHER" id="PTHR11880:SF8">
    <property type="entry name" value="SMALL RIBOSOMAL SUBUNIT PROTEIN US19M"/>
    <property type="match status" value="1"/>
</dbReference>
<dbReference type="Pfam" id="PF00203">
    <property type="entry name" value="Ribosomal_S19"/>
    <property type="match status" value="1"/>
</dbReference>
<dbReference type="PIRSF" id="PIRSF002144">
    <property type="entry name" value="Ribosomal_S19"/>
    <property type="match status" value="1"/>
</dbReference>
<dbReference type="PRINTS" id="PR00975">
    <property type="entry name" value="RIBOSOMALS19"/>
</dbReference>
<dbReference type="SUPFAM" id="SSF54570">
    <property type="entry name" value="Ribosomal protein S19"/>
    <property type="match status" value="1"/>
</dbReference>
<dbReference type="PROSITE" id="PS00323">
    <property type="entry name" value="RIBOSOMAL_S19"/>
    <property type="match status" value="1"/>
</dbReference>
<proteinExistence type="inferred from homology"/>
<keyword id="KW-1185">Reference proteome</keyword>
<keyword id="KW-0687">Ribonucleoprotein</keyword>
<keyword id="KW-0689">Ribosomal protein</keyword>
<keyword id="KW-0694">RNA-binding</keyword>
<keyword id="KW-0699">rRNA-binding</keyword>
<evidence type="ECO:0000250" key="1"/>
<evidence type="ECO:0000305" key="2"/>
<feature type="initiator methionine" description="Removed" evidence="1">
    <location>
        <position position="1"/>
    </location>
</feature>
<feature type="chain" id="PRO_0000129830" description="Small ribosomal subunit protein uS19">
    <location>
        <begin position="2"/>
        <end position="91"/>
    </location>
</feature>
<protein>
    <recommendedName>
        <fullName evidence="2">Small ribosomal subunit protein uS19</fullName>
    </recommendedName>
    <alternativeName>
        <fullName>30S ribosomal protein S19</fullName>
    </alternativeName>
</protein>
<comment type="function">
    <text evidence="1">Protein S19 forms a complex with S13 that binds strongly to the 16S ribosomal RNA.</text>
</comment>
<comment type="similarity">
    <text evidence="2">Belongs to the universal ribosomal protein uS19 family.</text>
</comment>
<gene>
    <name type="primary">rpsS</name>
    <name type="synonym">rps19</name>
    <name type="ordered locus">HD_1979</name>
</gene>
<organism>
    <name type="scientific">Haemophilus ducreyi (strain 35000HP / ATCC 700724)</name>
    <dbReference type="NCBI Taxonomy" id="233412"/>
    <lineage>
        <taxon>Bacteria</taxon>
        <taxon>Pseudomonadati</taxon>
        <taxon>Pseudomonadota</taxon>
        <taxon>Gammaproteobacteria</taxon>
        <taxon>Pasteurellales</taxon>
        <taxon>Pasteurellaceae</taxon>
        <taxon>Haemophilus</taxon>
    </lineage>
</organism>